<dbReference type="EC" id="3.5.2.7" evidence="1"/>
<dbReference type="EMBL" id="AP006618">
    <property type="protein sequence ID" value="BAD56079.1"/>
    <property type="molecule type" value="Genomic_DNA"/>
</dbReference>
<dbReference type="RefSeq" id="WP_011207764.1">
    <property type="nucleotide sequence ID" value="NC_006361.1"/>
</dbReference>
<dbReference type="SMR" id="Q5Z0G2"/>
<dbReference type="STRING" id="247156.NFA_12340"/>
<dbReference type="GeneID" id="61132054"/>
<dbReference type="KEGG" id="nfa:NFA_12340"/>
<dbReference type="eggNOG" id="COG1228">
    <property type="taxonomic scope" value="Bacteria"/>
</dbReference>
<dbReference type="HOGENOM" id="CLU_041647_1_0_11"/>
<dbReference type="OrthoDB" id="9776455at2"/>
<dbReference type="UniPathway" id="UPA00379">
    <property type="reaction ID" value="UER00551"/>
</dbReference>
<dbReference type="Proteomes" id="UP000006820">
    <property type="component" value="Chromosome"/>
</dbReference>
<dbReference type="GO" id="GO:0005737">
    <property type="term" value="C:cytoplasm"/>
    <property type="evidence" value="ECO:0007669"/>
    <property type="project" value="UniProtKB-SubCell"/>
</dbReference>
<dbReference type="GO" id="GO:0050480">
    <property type="term" value="F:imidazolonepropionase activity"/>
    <property type="evidence" value="ECO:0007669"/>
    <property type="project" value="UniProtKB-UniRule"/>
</dbReference>
<dbReference type="GO" id="GO:0005506">
    <property type="term" value="F:iron ion binding"/>
    <property type="evidence" value="ECO:0007669"/>
    <property type="project" value="UniProtKB-UniRule"/>
</dbReference>
<dbReference type="GO" id="GO:0008270">
    <property type="term" value="F:zinc ion binding"/>
    <property type="evidence" value="ECO:0007669"/>
    <property type="project" value="UniProtKB-UniRule"/>
</dbReference>
<dbReference type="GO" id="GO:0019556">
    <property type="term" value="P:L-histidine catabolic process to glutamate and formamide"/>
    <property type="evidence" value="ECO:0007669"/>
    <property type="project" value="UniProtKB-UniPathway"/>
</dbReference>
<dbReference type="GO" id="GO:0019557">
    <property type="term" value="P:L-histidine catabolic process to glutamate and formate"/>
    <property type="evidence" value="ECO:0007669"/>
    <property type="project" value="UniProtKB-UniPathway"/>
</dbReference>
<dbReference type="Gene3D" id="3.20.20.140">
    <property type="entry name" value="Metal-dependent hydrolases"/>
    <property type="match status" value="1"/>
</dbReference>
<dbReference type="Gene3D" id="2.30.40.10">
    <property type="entry name" value="Urease, subunit C, domain 1"/>
    <property type="match status" value="1"/>
</dbReference>
<dbReference type="HAMAP" id="MF_00372">
    <property type="entry name" value="HutI"/>
    <property type="match status" value="1"/>
</dbReference>
<dbReference type="InterPro" id="IPR006680">
    <property type="entry name" value="Amidohydro-rel"/>
</dbReference>
<dbReference type="InterPro" id="IPR005920">
    <property type="entry name" value="HutI"/>
</dbReference>
<dbReference type="InterPro" id="IPR011059">
    <property type="entry name" value="Metal-dep_hydrolase_composite"/>
</dbReference>
<dbReference type="InterPro" id="IPR032466">
    <property type="entry name" value="Metal_Hydrolase"/>
</dbReference>
<dbReference type="NCBIfam" id="TIGR01224">
    <property type="entry name" value="hutI"/>
    <property type="match status" value="1"/>
</dbReference>
<dbReference type="PANTHER" id="PTHR42752">
    <property type="entry name" value="IMIDAZOLONEPROPIONASE"/>
    <property type="match status" value="1"/>
</dbReference>
<dbReference type="PANTHER" id="PTHR42752:SF1">
    <property type="entry name" value="IMIDAZOLONEPROPIONASE-RELATED"/>
    <property type="match status" value="1"/>
</dbReference>
<dbReference type="Pfam" id="PF01979">
    <property type="entry name" value="Amidohydro_1"/>
    <property type="match status" value="1"/>
</dbReference>
<dbReference type="SUPFAM" id="SSF51338">
    <property type="entry name" value="Composite domain of metallo-dependent hydrolases"/>
    <property type="match status" value="2"/>
</dbReference>
<dbReference type="SUPFAM" id="SSF51556">
    <property type="entry name" value="Metallo-dependent hydrolases"/>
    <property type="match status" value="1"/>
</dbReference>
<feature type="chain" id="PRO_0000306475" description="Imidazolonepropionase">
    <location>
        <begin position="1"/>
        <end position="392"/>
    </location>
</feature>
<feature type="binding site" evidence="1">
    <location>
        <position position="70"/>
    </location>
    <ligand>
        <name>Fe(3+)</name>
        <dbReference type="ChEBI" id="CHEBI:29034"/>
    </ligand>
</feature>
<feature type="binding site" evidence="1">
    <location>
        <position position="70"/>
    </location>
    <ligand>
        <name>Zn(2+)</name>
        <dbReference type="ChEBI" id="CHEBI:29105"/>
    </ligand>
</feature>
<feature type="binding site" evidence="1">
    <location>
        <position position="72"/>
    </location>
    <ligand>
        <name>Fe(3+)</name>
        <dbReference type="ChEBI" id="CHEBI:29034"/>
    </ligand>
</feature>
<feature type="binding site" evidence="1">
    <location>
        <position position="72"/>
    </location>
    <ligand>
        <name>Zn(2+)</name>
        <dbReference type="ChEBI" id="CHEBI:29105"/>
    </ligand>
</feature>
<feature type="binding site" evidence="1">
    <location>
        <position position="79"/>
    </location>
    <ligand>
        <name>4-imidazolone-5-propanoate</name>
        <dbReference type="ChEBI" id="CHEBI:77893"/>
    </ligand>
</feature>
<feature type="binding site" evidence="1">
    <location>
        <position position="137"/>
    </location>
    <ligand>
        <name>4-imidazolone-5-propanoate</name>
        <dbReference type="ChEBI" id="CHEBI:77893"/>
    </ligand>
</feature>
<feature type="binding site" evidence="1">
    <location>
        <position position="137"/>
    </location>
    <ligand>
        <name>N-formimidoyl-L-glutamate</name>
        <dbReference type="ChEBI" id="CHEBI:58928"/>
    </ligand>
</feature>
<feature type="binding site" evidence="1">
    <location>
        <position position="164"/>
    </location>
    <ligand>
        <name>4-imidazolone-5-propanoate</name>
        <dbReference type="ChEBI" id="CHEBI:77893"/>
    </ligand>
</feature>
<feature type="binding site" evidence="1">
    <location>
        <position position="227"/>
    </location>
    <ligand>
        <name>Fe(3+)</name>
        <dbReference type="ChEBI" id="CHEBI:29034"/>
    </ligand>
</feature>
<feature type="binding site" evidence="1">
    <location>
        <position position="227"/>
    </location>
    <ligand>
        <name>Zn(2+)</name>
        <dbReference type="ChEBI" id="CHEBI:29105"/>
    </ligand>
</feature>
<feature type="binding site" evidence="1">
    <location>
        <position position="230"/>
    </location>
    <ligand>
        <name>4-imidazolone-5-propanoate</name>
        <dbReference type="ChEBI" id="CHEBI:77893"/>
    </ligand>
</feature>
<feature type="binding site" evidence="1">
    <location>
        <position position="301"/>
    </location>
    <ligand>
        <name>Fe(3+)</name>
        <dbReference type="ChEBI" id="CHEBI:29034"/>
    </ligand>
</feature>
<feature type="binding site" evidence="1">
    <location>
        <position position="301"/>
    </location>
    <ligand>
        <name>Zn(2+)</name>
        <dbReference type="ChEBI" id="CHEBI:29105"/>
    </ligand>
</feature>
<feature type="binding site" evidence="1">
    <location>
        <position position="303"/>
    </location>
    <ligand>
        <name>N-formimidoyl-L-glutamate</name>
        <dbReference type="ChEBI" id="CHEBI:58928"/>
    </ligand>
</feature>
<feature type="binding site" evidence="1">
    <location>
        <position position="305"/>
    </location>
    <ligand>
        <name>N-formimidoyl-L-glutamate</name>
        <dbReference type="ChEBI" id="CHEBI:58928"/>
    </ligand>
</feature>
<feature type="binding site" evidence="1">
    <location>
        <position position="306"/>
    </location>
    <ligand>
        <name>4-imidazolone-5-propanoate</name>
        <dbReference type="ChEBI" id="CHEBI:77893"/>
    </ligand>
</feature>
<proteinExistence type="inferred from homology"/>
<protein>
    <recommendedName>
        <fullName evidence="1">Imidazolonepropionase</fullName>
        <ecNumber evidence="1">3.5.2.7</ecNumber>
    </recommendedName>
    <alternativeName>
        <fullName evidence="1">Imidazolone-5-propionate hydrolase</fullName>
    </alternativeName>
</protein>
<accession>Q5Z0G2</accession>
<name>HUTI_NOCFA</name>
<comment type="function">
    <text evidence="1">Catalyzes the hydrolytic cleavage of the carbon-nitrogen bond in imidazolone-5-propanoate to yield N-formimidoyl-L-glutamate. It is the third step in the universal histidine degradation pathway.</text>
</comment>
<comment type="catalytic activity">
    <reaction evidence="1">
        <text>4-imidazolone-5-propanoate + H2O = N-formimidoyl-L-glutamate</text>
        <dbReference type="Rhea" id="RHEA:23660"/>
        <dbReference type="ChEBI" id="CHEBI:15377"/>
        <dbReference type="ChEBI" id="CHEBI:58928"/>
        <dbReference type="ChEBI" id="CHEBI:77893"/>
        <dbReference type="EC" id="3.5.2.7"/>
    </reaction>
</comment>
<comment type="cofactor">
    <cofactor evidence="1">
        <name>Zn(2+)</name>
        <dbReference type="ChEBI" id="CHEBI:29105"/>
    </cofactor>
    <cofactor evidence="1">
        <name>Fe(3+)</name>
        <dbReference type="ChEBI" id="CHEBI:29034"/>
    </cofactor>
    <text evidence="1">Binds 1 zinc or iron ion per subunit.</text>
</comment>
<comment type="pathway">
    <text evidence="1">Amino-acid degradation; L-histidine degradation into L-glutamate; N-formimidoyl-L-glutamate from L-histidine: step 3/3.</text>
</comment>
<comment type="subcellular location">
    <subcellularLocation>
        <location evidence="1">Cytoplasm</location>
    </subcellularLocation>
</comment>
<comment type="similarity">
    <text evidence="1">Belongs to the metallo-dependent hydrolases superfamily. HutI family.</text>
</comment>
<organism>
    <name type="scientific">Nocardia farcinica (strain IFM 10152)</name>
    <dbReference type="NCBI Taxonomy" id="247156"/>
    <lineage>
        <taxon>Bacteria</taxon>
        <taxon>Bacillati</taxon>
        <taxon>Actinomycetota</taxon>
        <taxon>Actinomycetes</taxon>
        <taxon>Mycobacteriales</taxon>
        <taxon>Nocardiaceae</taxon>
        <taxon>Nocardia</taxon>
    </lineage>
</organism>
<evidence type="ECO:0000255" key="1">
    <source>
        <dbReference type="HAMAP-Rule" id="MF_00372"/>
    </source>
</evidence>
<reference key="1">
    <citation type="journal article" date="2004" name="Proc. Natl. Acad. Sci. U.S.A.">
        <title>The complete genomic sequence of Nocardia farcinica IFM 10152.</title>
        <authorList>
            <person name="Ishikawa J."/>
            <person name="Yamashita A."/>
            <person name="Mikami Y."/>
            <person name="Hoshino Y."/>
            <person name="Kurita H."/>
            <person name="Hotta K."/>
            <person name="Shiba T."/>
            <person name="Hattori M."/>
        </authorList>
    </citation>
    <scope>NUCLEOTIDE SEQUENCE [LARGE SCALE GENOMIC DNA]</scope>
    <source>
        <strain>IFM 10152</strain>
    </source>
</reference>
<keyword id="KW-0963">Cytoplasm</keyword>
<keyword id="KW-0369">Histidine metabolism</keyword>
<keyword id="KW-0378">Hydrolase</keyword>
<keyword id="KW-0408">Iron</keyword>
<keyword id="KW-0479">Metal-binding</keyword>
<keyword id="KW-1185">Reference proteome</keyword>
<keyword id="KW-0862">Zinc</keyword>
<sequence length="392" mass="41273">MPTTALTGIGQLVTNDPALGEGPLGLRRDAAIVFEDGVVAWVGDSAHVPATDTAHDLDGRAVLPGFVESHSHLVFAGDRAEEFAARMSGRPYGAGGIRTTIEATRAATDEQLGANVRRLLDESLRAGSTTVECKSGYGQSVEHELRSVRVAGRYTDEVTLLAAHVPPPEYAGRVDDYVAMACAEMIPRCAPHAKWIDVFCEQGAFDRDQAHAVLTAGIAHGLVPRVHGNQLHRGPGVQLAVEVGAASVDHVTYIDDADIEALAHSDTVATLLPGADFCTRNSYPDARALLDAGVTVALGADCNPGTSYTTSLPFCIALAVRELRMTPDEAVWAATAGGARALRRGDVGVLTPGARADALALDAPSHLHLAYRPGVPLISRVWREGTLAYATN</sequence>
<gene>
    <name evidence="1" type="primary">hutI</name>
    <name type="ordered locus">NFA_12340</name>
</gene>